<dbReference type="EC" id="3.5.1.41" evidence="9"/>
<dbReference type="EMBL" id="AY633657">
    <property type="protein sequence ID" value="AAT68493.1"/>
    <property type="molecule type" value="Genomic_DNA"/>
</dbReference>
<dbReference type="PDB" id="2IW0">
    <property type="method" value="X-ray"/>
    <property type="resolution" value="1.81 A"/>
    <property type="chains" value="A=1-248"/>
</dbReference>
<dbReference type="PDBsum" id="2IW0"/>
<dbReference type="SMR" id="Q6DWK3"/>
<dbReference type="BioCyc" id="MetaCyc:MONOMER-16910"/>
<dbReference type="BRENDA" id="3.5.1.41">
    <property type="organism ID" value="1572"/>
</dbReference>
<dbReference type="SABIO-RK" id="Q6DWK3"/>
<dbReference type="EvolutionaryTrace" id="Q6DWK3"/>
<dbReference type="GO" id="GO:0005576">
    <property type="term" value="C:extracellular region"/>
    <property type="evidence" value="ECO:0000314"/>
    <property type="project" value="UniProtKB"/>
</dbReference>
<dbReference type="GO" id="GO:0008061">
    <property type="term" value="F:chitin binding"/>
    <property type="evidence" value="ECO:0007669"/>
    <property type="project" value="UniProtKB-KW"/>
</dbReference>
<dbReference type="GO" id="GO:0004099">
    <property type="term" value="F:chitin deacetylase activity"/>
    <property type="evidence" value="ECO:0000314"/>
    <property type="project" value="UniProtKB"/>
</dbReference>
<dbReference type="GO" id="GO:0008270">
    <property type="term" value="F:zinc ion binding"/>
    <property type="evidence" value="ECO:0000314"/>
    <property type="project" value="UniProtKB"/>
</dbReference>
<dbReference type="GO" id="GO:0071555">
    <property type="term" value="P:cell wall organization"/>
    <property type="evidence" value="ECO:0007669"/>
    <property type="project" value="UniProtKB-KW"/>
</dbReference>
<dbReference type="GO" id="GO:0006032">
    <property type="term" value="P:chitin catabolic process"/>
    <property type="evidence" value="ECO:0000314"/>
    <property type="project" value="UniProtKB"/>
</dbReference>
<dbReference type="GO" id="GO:0000272">
    <property type="term" value="P:polysaccharide catabolic process"/>
    <property type="evidence" value="ECO:0007669"/>
    <property type="project" value="UniProtKB-KW"/>
</dbReference>
<dbReference type="CDD" id="cd10951">
    <property type="entry name" value="CE4_ClCDA_like"/>
    <property type="match status" value="1"/>
</dbReference>
<dbReference type="Gene3D" id="3.20.20.370">
    <property type="entry name" value="Glycoside hydrolase/deacetylase"/>
    <property type="match status" value="1"/>
</dbReference>
<dbReference type="InterPro" id="IPR011330">
    <property type="entry name" value="Glyco_hydro/deAcase_b/a-brl"/>
</dbReference>
<dbReference type="InterPro" id="IPR002509">
    <property type="entry name" value="NODB_dom"/>
</dbReference>
<dbReference type="PANTHER" id="PTHR46471">
    <property type="entry name" value="CHITIN DEACETYLASE"/>
    <property type="match status" value="1"/>
</dbReference>
<dbReference type="PANTHER" id="PTHR46471:SF4">
    <property type="entry name" value="CHITIN DEACETYLASE"/>
    <property type="match status" value="1"/>
</dbReference>
<dbReference type="Pfam" id="PF01522">
    <property type="entry name" value="Polysacc_deac_1"/>
    <property type="match status" value="1"/>
</dbReference>
<dbReference type="SUPFAM" id="SSF88713">
    <property type="entry name" value="Glycoside hydrolase/deacetylase"/>
    <property type="match status" value="1"/>
</dbReference>
<dbReference type="PROSITE" id="PS51677">
    <property type="entry name" value="NODB"/>
    <property type="match status" value="1"/>
</dbReference>
<evidence type="ECO:0000255" key="1">
    <source>
        <dbReference type="PROSITE-ProRule" id="PRU01014"/>
    </source>
</evidence>
<evidence type="ECO:0000269" key="2">
    <source>
    </source>
</evidence>
<evidence type="ECO:0000269" key="3">
    <source>
    </source>
</evidence>
<evidence type="ECO:0000269" key="4">
    <source>
    </source>
</evidence>
<evidence type="ECO:0000269" key="5">
    <source>
    </source>
</evidence>
<evidence type="ECO:0000269" key="6">
    <source>
    </source>
</evidence>
<evidence type="ECO:0000269" key="7">
    <source>
    </source>
</evidence>
<evidence type="ECO:0000269" key="8">
    <source>
    </source>
</evidence>
<evidence type="ECO:0000269" key="9">
    <source>
    </source>
</evidence>
<evidence type="ECO:0000269" key="10">
    <source>
    </source>
</evidence>
<evidence type="ECO:0000269" key="11">
    <source>
    </source>
</evidence>
<evidence type="ECO:0000269" key="12">
    <source>
    </source>
</evidence>
<evidence type="ECO:0000303" key="13">
    <source>
    </source>
</evidence>
<evidence type="ECO:0000303" key="14">
    <source>
    </source>
</evidence>
<evidence type="ECO:0000303" key="15">
    <source>
    </source>
</evidence>
<evidence type="ECO:0000303" key="16">
    <source>
    </source>
</evidence>
<evidence type="ECO:0000303" key="17">
    <source>
    </source>
</evidence>
<evidence type="ECO:0000303" key="18">
    <source>
    </source>
</evidence>
<evidence type="ECO:0000305" key="19"/>
<evidence type="ECO:0000305" key="20">
    <source>
    </source>
</evidence>
<evidence type="ECO:0000312" key="21">
    <source>
        <dbReference type="EMBL" id="AAT68493.1"/>
    </source>
</evidence>
<evidence type="ECO:0007744" key="22">
    <source>
        <dbReference type="PDB" id="2IW0"/>
    </source>
</evidence>
<evidence type="ECO:0007829" key="23">
    <source>
        <dbReference type="PDB" id="2IW0"/>
    </source>
</evidence>
<name>CDA_COLLN</name>
<reference evidence="21" key="1">
    <citation type="journal article" date="2004" name="Protein Expr. Purif.">
        <title>Expression of chitin deacetylase from Colletotrichum lindemuthianum in Pichia pastoris: purification and characterization.</title>
        <authorList>
            <person name="Shrestha B."/>
            <person name="Blondeau K."/>
            <person name="Stevens W.F."/>
            <person name="Hegarat F.L."/>
        </authorList>
    </citation>
    <scope>NUCLEOTIDE SEQUENCE [GENOMIC DNA]</scope>
    <scope>FUNCTION</scope>
    <scope>CATALYTIC ACTIVITY</scope>
    <scope>COFACTOR</scope>
    <scope>BIOPHYSICOCHEMICAL PROPERTIES</scope>
    <scope>VARIANTS LEU-7; ALA-57; LYS-69; 125-HIS-VAL-126 DELINS GLN-LEU; ASP-189; GLY-194 AND ARG-219</scope>
    <source>
        <strain>UPS9</strain>
    </source>
</reference>
<reference evidence="19" key="2">
    <citation type="journal article" date="1995" name="J. Biol. Chem.">
        <title>Purification and characterization of chitin deacetylase from Colletotrichum lindemuthianum.</title>
        <authorList>
            <person name="Tsigos I."/>
            <person name="Bouriotis V."/>
        </authorList>
    </citation>
    <scope>FUNCTION</scope>
    <scope>BIOPHYSICOCHEMICAL PROPERTIES</scope>
    <scope>SUBUNIT</scope>
    <scope>SUBCELLULAR LOCATION</scope>
    <scope>GLYCOSYLATION</scope>
    <source>
        <strain>DSM 63144</strain>
    </source>
</reference>
<reference evidence="19" key="3">
    <citation type="journal article" date="1996" name="Biosci. Biotechnol. Biochem.">
        <title>Purification and characterization of extracellular chitin deacetylase from Colletotrichum lindemuthianum.</title>
        <authorList>
            <person name="Tokuyasu K."/>
            <person name="Ohnishi-Kameyama M."/>
            <person name="Hayashi K."/>
        </authorList>
    </citation>
    <scope>FUNCTION</scope>
    <scope>CATALYTIC ACTIVITY</scope>
    <scope>COFACTOR</scope>
    <scope>BIOPHYSICOCHEMICAL PROPERTIES</scope>
    <scope>SUBCELLULAR LOCATION</scope>
    <scope>GLYCOSYLATION</scope>
    <source>
        <strain>ATCC 56676</strain>
    </source>
</reference>
<reference evidence="19" key="4">
    <citation type="journal article" date="1997" name="Carbohydr. Res.">
        <title>Deacetylation of chitin oligosaccharides of dp 2-4 by chitin deacetylase from Colletotrichum lindemuthianum.</title>
        <authorList>
            <person name="Tokuyasu K."/>
            <person name="Ono H."/>
            <person name="Ohnishi-Kameyama M."/>
            <person name="Hayashi K."/>
            <person name="Mori Y."/>
        </authorList>
    </citation>
    <scope>FUNCTION</scope>
    <scope>CATALYTIC ACTIVITY</scope>
    <source>
        <strain>ATCC 56676</strain>
    </source>
</reference>
<reference evidence="19" key="5">
    <citation type="journal article" date="1999" name="Carbohydr. Res.">
        <title>Reverse hydrolysis reaction of chitin deacetylase and enzymatic synthesis of beta-D-GlcNAc-(1--&gt;4)-GlcN from chitobiose.</title>
        <authorList>
            <person name="Tokuyasu K."/>
            <person name="Ono H."/>
            <person name="Hayashi K."/>
            <person name="Mori Y."/>
        </authorList>
    </citation>
    <scope>CATALYTIC ACTIVITY</scope>
    <scope>COFACTOR</scope>
    <source>
        <strain>ATCC 56676</strain>
    </source>
</reference>
<reference evidence="19" key="6">
    <citation type="journal article" date="1999" name="FEBS Lett.">
        <title>Production of a recombinant chitin deacetylase in the culture medium of Escherichia coli cells.</title>
        <authorList>
            <person name="Tokuyasu K."/>
            <person name="Kaneko S."/>
            <person name="Hayashi K."/>
            <person name="Mori Y."/>
        </authorList>
    </citation>
    <scope>CATALYTIC ACTIVITY</scope>
    <source>
        <strain>ATCC 56676</strain>
    </source>
</reference>
<reference evidence="19" key="7">
    <citation type="journal article" date="1999" name="J. Biosci. Bioeng.">
        <title>Cloning and expression of chitin deacetylase gene from a Deuteromycete, Colletotrichum lindemuthianum.</title>
        <authorList>
            <person name="Tokuyasu K."/>
            <person name="Ohnishi-Kameyama M."/>
            <person name="Hayashi K."/>
            <person name="Mori Y."/>
        </authorList>
    </citation>
    <scope>FUNCTION</scope>
    <scope>CATALYTIC ACTIVITY</scope>
    <scope>PROTEIN SEQUENCE OF 27-32</scope>
    <source>
        <strain>ATCC 56676</strain>
    </source>
</reference>
<reference evidence="19" key="8">
    <citation type="journal article" date="2000" name="Biochemistry">
        <title>Recognition of chitooligosaccharides and their N-acetyl groups by putative subsites of chitin deacetylase from a deuteromycete, Colletotrichum lindemuthianum.</title>
        <authorList>
            <person name="Tokuyasu K."/>
            <person name="Mitsutomi M."/>
            <person name="Yamaguchi I."/>
            <person name="Hayashi K."/>
            <person name="Mori Y."/>
        </authorList>
    </citation>
    <scope>FUNCTION</scope>
    <scope>CATALYTIC ACTIVITY</scope>
    <source>
        <strain>ATCC 56676</strain>
    </source>
</reference>
<reference evidence="19" key="9">
    <citation type="journal article" date="2000" name="Carbohydr. Res.">
        <title>Synthesis of a chitosan tetramer derivative, beta-D-GlcNAc-(1--&gt;4)-beta-D-GlcNAc-(1--&gt;4)-beta-D-GlcNAc-(1--&gt;4)-D-Glc N through a partial N-acetylation reaction by chitin deacetylase.</title>
        <authorList>
            <person name="Tokuyasu K."/>
            <person name="Ono H."/>
            <person name="Mitsutomi M."/>
            <person name="Hayashi K."/>
            <person name="Mori Y."/>
        </authorList>
    </citation>
    <scope>CATALYTIC ACTIVITY</scope>
    <source>
        <strain>ATCC 56676</strain>
    </source>
</reference>
<reference evidence="19" key="10">
    <citation type="journal article" date="2003" name="Biochem. J.">
        <title>Subsite structure of the endo-type chitin deacetylase from a deuteromycete, Colletotrichum lindemuthianum: an investigation using steady-state kinetic analysis and MS.</title>
        <authorList>
            <person name="Hekmat O."/>
            <person name="Tokuyasu K."/>
            <person name="Withers S.G."/>
        </authorList>
    </citation>
    <scope>CATALYTIC ACTIVITY</scope>
    <scope>BIOPHYSICOCHEMICAL PROPERTIES</scope>
    <source>
        <strain>ATCC 56676</strain>
    </source>
</reference>
<reference evidence="19" key="11">
    <citation type="journal article" date="2011" name="J. Food Sci. Technol.">
        <title>Solid state fermentation production of chitin deacetylase by Colletotrichum lindemuthianum ATCC 56676 using different substrates.</title>
        <authorList>
            <person name="Suresh P.V."/>
            <person name="Sachindra N.M."/>
            <person name="Bhaskar N."/>
        </authorList>
    </citation>
    <scope>BIOTECHNOLOGY</scope>
    <source>
        <strain>ATCC 56676</strain>
    </source>
</reference>
<reference evidence="19" key="12">
    <citation type="journal article" date="2012" name="J. Microbiol. Biotechnol.">
        <title>Synthesis and high expression of chitin deacetylase from Colletotrichum lindemuthianum in Pichia pastoris GS115.</title>
        <authorList>
            <person name="Kang L."/>
            <person name="Chen X."/>
            <person name="Zhai C."/>
            <person name="Ma L."/>
        </authorList>
    </citation>
    <scope>BIOTECHNOLOGY</scope>
</reference>
<reference evidence="22" key="13">
    <citation type="journal article" date="2006" name="Biochemistry">
        <title>Structure and mechanism of chitin deacetylase from the fungal pathogen Colletotrichum lindemuthianum.</title>
        <authorList>
            <person name="Blair D.E."/>
            <person name="Hekmat O."/>
            <person name="Schuttelkopf A.W."/>
            <person name="Shrestha B."/>
            <person name="Tokuyasu K."/>
            <person name="Withers S.G."/>
            <person name="van Aalten D.M."/>
        </authorList>
    </citation>
    <scope>X-RAY CRYSTALLOGRAPHY (1.81 ANGSTROMS) IN COMPLEX WITH ZINC AND ACETATE PRODUCT</scope>
    <scope>FUNCTION</scope>
    <scope>CATALYTIC ACTIVITY</scope>
    <scope>COFACTOR</scope>
    <scope>BIOPHYSICOCHEMICAL PROPERTIES</scope>
    <scope>ACTIVE SITE</scope>
    <scope>DISULFIDE BONDS</scope>
    <source>
        <strain>UPS9</strain>
    </source>
</reference>
<sequence length="248" mass="27041">MHFSTLFGAAATAALAGSTNASPLARRQVPVGTPILQCTQPGLVALTYDDGPFTFTPQLLDILKQNDVRATFFVNGNNWANIEAGSNPDTIRRMRADGHLVGSHTYAHPDLNTLSSADRISQMRHVEEATRRIDGFAPKYMRAPYLSCDAGCQGDLGGLGYHIIDTNLDTKDYENNKPETTHLSAEKFNNELSADVGANSYIVLSHDVHEQTVVSLTQKLIDTLKSKGYRAVTVGECLGDAPENWYKA</sequence>
<keyword id="KW-0002">3D-structure</keyword>
<keyword id="KW-0119">Carbohydrate metabolism</keyword>
<keyword id="KW-0961">Cell wall biogenesis/degradation</keyword>
<keyword id="KW-0146">Chitin degradation</keyword>
<keyword id="KW-0147">Chitin-binding</keyword>
<keyword id="KW-0170">Cobalt</keyword>
<keyword id="KW-0903">Direct protein sequencing</keyword>
<keyword id="KW-1015">Disulfide bond</keyword>
<keyword id="KW-0325">Glycoprotein</keyword>
<keyword id="KW-0378">Hydrolase</keyword>
<keyword id="KW-0479">Metal-binding</keyword>
<keyword id="KW-0624">Polysaccharide degradation</keyword>
<keyword id="KW-0964">Secreted</keyword>
<keyword id="KW-0732">Signal</keyword>
<keyword id="KW-0843">Virulence</keyword>
<gene>
    <name evidence="14" type="primary">CDA</name>
</gene>
<protein>
    <recommendedName>
        <fullName evidence="18">Chitin deacetylase</fullName>
        <ecNumber evidence="9">3.5.1.41</ecNumber>
    </recommendedName>
    <alternativeName>
        <fullName evidence="15">ClCDA</fullName>
    </alternativeName>
</protein>
<proteinExistence type="evidence at protein level"/>
<feature type="signal peptide" evidence="8">
    <location>
        <begin position="1"/>
        <end position="26"/>
    </location>
</feature>
<feature type="chain" id="PRO_5004273461" description="Chitin deacetylase">
    <location>
        <begin position="27"/>
        <end position="248"/>
    </location>
</feature>
<feature type="domain" description="NodB homology" evidence="1">
    <location>
        <begin position="42"/>
        <end position="232"/>
    </location>
</feature>
<feature type="active site" description="Proton acceptor" evidence="9">
    <location>
        <position position="49"/>
    </location>
</feature>
<feature type="active site" description="Proton donor" evidence="9">
    <location>
        <position position="206"/>
    </location>
</feature>
<feature type="binding site" evidence="9 22">
    <location>
        <position position="49"/>
    </location>
    <ligand>
        <name>acetate</name>
        <dbReference type="ChEBI" id="CHEBI:30089"/>
    </ligand>
</feature>
<feature type="binding site" evidence="20 22">
    <location>
        <position position="50"/>
    </location>
    <ligand>
        <name>Co(2+)</name>
        <dbReference type="ChEBI" id="CHEBI:48828"/>
    </ligand>
</feature>
<feature type="binding site" evidence="20 22">
    <location>
        <position position="104"/>
    </location>
    <ligand>
        <name>Co(2+)</name>
        <dbReference type="ChEBI" id="CHEBI:48828"/>
    </ligand>
</feature>
<feature type="binding site" evidence="20 22">
    <location>
        <position position="108"/>
    </location>
    <ligand>
        <name>Co(2+)</name>
        <dbReference type="ChEBI" id="CHEBI:48828"/>
    </ligand>
</feature>
<feature type="binding site" evidence="9 22">
    <location>
        <position position="145"/>
    </location>
    <ligand>
        <name>acetate</name>
        <dbReference type="ChEBI" id="CHEBI:30089"/>
    </ligand>
</feature>
<feature type="site" description="Prevents de-N-acetylated sugar residues from interacting with the active site" evidence="15">
    <location>
        <position position="171"/>
    </location>
</feature>
<feature type="disulfide bond" evidence="9 22">
    <location>
        <begin position="38"/>
        <end position="237"/>
    </location>
</feature>
<feature type="disulfide bond" evidence="9 22">
    <location>
        <begin position="148"/>
        <end position="152"/>
    </location>
</feature>
<feature type="sequence variant" description="In strain: ATCC 56676." evidence="7">
    <original>F</original>
    <variation>L</variation>
    <location>
        <position position="7"/>
    </location>
</feature>
<feature type="sequence variant" description="In strain: ATCC 56676." evidence="7">
    <original>P</original>
    <variation>A</variation>
    <location>
        <position position="57"/>
    </location>
</feature>
<feature type="sequence variant" description="In strain: ATCC 56676." evidence="7">
    <original>R</original>
    <variation>K</variation>
    <location>
        <position position="69"/>
    </location>
</feature>
<feature type="sequence variant" description="In strain: ATCC 56676." evidence="7">
    <original>HV</original>
    <variation>QL</variation>
    <location>
        <begin position="125"/>
        <end position="126"/>
    </location>
</feature>
<feature type="sequence variant" description="In strain: ATCC 56676." evidence="7">
    <original>N</original>
    <variation>D</variation>
    <location>
        <position position="189"/>
    </location>
</feature>
<feature type="sequence variant" description="In strain: ATCC 56676." evidence="7">
    <original>A</original>
    <variation>G</variation>
    <location>
        <position position="194"/>
    </location>
</feature>
<feature type="sequence variant" description="In strain: ATCC 56676." evidence="7">
    <original>K</original>
    <variation>R</variation>
    <location>
        <position position="219"/>
    </location>
</feature>
<feature type="strand" evidence="23">
    <location>
        <begin position="31"/>
        <end position="35"/>
    </location>
</feature>
<feature type="strand" evidence="23">
    <location>
        <begin position="39"/>
        <end position="50"/>
    </location>
</feature>
<feature type="helix" evidence="23">
    <location>
        <begin position="56"/>
        <end position="66"/>
    </location>
</feature>
<feature type="strand" evidence="23">
    <location>
        <begin position="71"/>
        <end position="74"/>
    </location>
</feature>
<feature type="strand" evidence="23">
    <location>
        <begin position="76"/>
        <end position="81"/>
    </location>
</feature>
<feature type="helix" evidence="23">
    <location>
        <begin position="87"/>
        <end position="96"/>
    </location>
</feature>
<feature type="strand" evidence="23">
    <location>
        <begin position="100"/>
        <end position="103"/>
    </location>
</feature>
<feature type="helix" evidence="23">
    <location>
        <begin position="111"/>
        <end position="113"/>
    </location>
</feature>
<feature type="helix" evidence="23">
    <location>
        <begin position="116"/>
        <end position="134"/>
    </location>
</feature>
<feature type="strand" evidence="23">
    <location>
        <begin position="137"/>
        <end position="141"/>
    </location>
</feature>
<feature type="helix" evidence="23">
    <location>
        <begin position="144"/>
        <end position="146"/>
    </location>
</feature>
<feature type="helix" evidence="23">
    <location>
        <begin position="150"/>
        <end position="158"/>
    </location>
</feature>
<feature type="strand" evidence="23">
    <location>
        <begin position="162"/>
        <end position="164"/>
    </location>
</feature>
<feature type="strand" evidence="23">
    <location>
        <begin position="167"/>
        <end position="169"/>
    </location>
</feature>
<feature type="turn" evidence="23">
    <location>
        <begin position="172"/>
        <end position="174"/>
    </location>
</feature>
<feature type="turn" evidence="23">
    <location>
        <begin position="178"/>
        <end position="180"/>
    </location>
</feature>
<feature type="helix" evidence="23">
    <location>
        <begin position="181"/>
        <end position="191"/>
    </location>
</feature>
<feature type="helix" evidence="23">
    <location>
        <begin position="196"/>
        <end position="198"/>
    </location>
</feature>
<feature type="strand" evidence="23">
    <location>
        <begin position="201"/>
        <end position="205"/>
    </location>
</feature>
<feature type="helix" evidence="23">
    <location>
        <begin position="210"/>
        <end position="214"/>
    </location>
</feature>
<feature type="helix" evidence="23">
    <location>
        <begin position="216"/>
        <end position="226"/>
    </location>
</feature>
<feature type="helix" evidence="23">
    <location>
        <begin position="234"/>
        <end position="237"/>
    </location>
</feature>
<feature type="helix" evidence="23">
    <location>
        <begin position="242"/>
        <end position="244"/>
    </location>
</feature>
<feature type="strand" evidence="23">
    <location>
        <begin position="245"/>
        <end position="247"/>
    </location>
</feature>
<accession>Q6DWK3</accession>
<organism evidence="21">
    <name type="scientific">Colletotrichum lindemuthianum</name>
    <name type="common">Bean anthracnose fungus</name>
    <name type="synonym">Glomerella lindemuthiana</name>
    <dbReference type="NCBI Taxonomy" id="290576"/>
    <lineage>
        <taxon>Eukaryota</taxon>
        <taxon>Fungi</taxon>
        <taxon>Dikarya</taxon>
        <taxon>Ascomycota</taxon>
        <taxon>Pezizomycotina</taxon>
        <taxon>Sordariomycetes</taxon>
        <taxon>Hypocreomycetidae</taxon>
        <taxon>Glomerellales</taxon>
        <taxon>Glomerellaceae</taxon>
        <taxon>Colletotrichum</taxon>
        <taxon>Colletotrichum orbiculare species complex</taxon>
    </lineage>
</organism>
<comment type="function">
    <text evidence="7 8 9 10 11 12 13 18">Hydrolyzes the N-acetamido groups of N-acetyl-D-glucosamine polymers in chitin to form chitosan and acetate (PubMed:15555935, PubMed:16232493, PubMed:16878976, PubMed:7592838, PubMed:8987657, PubMed:9373940). May play a role in evasion of the host immune response; plant chitinases liberate chitin molecules from the fungal cell wall which act as elicitors of the plant immune response, deacetylation of the liberated chitin neutralizes elicitor activity (PubMed:10913295, PubMed:8987657).</text>
</comment>
<comment type="catalytic activity">
    <reaction evidence="2 3 4 5 6 7 8 9 11 12">
        <text>[(1-&gt;4)-N-acetyl-beta-D-glucosaminyl](n) + n H2O = chitosan + n acetate</text>
        <dbReference type="Rhea" id="RHEA:10464"/>
        <dbReference type="Rhea" id="RHEA-COMP:9593"/>
        <dbReference type="Rhea" id="RHEA-COMP:9597"/>
        <dbReference type="ChEBI" id="CHEBI:15377"/>
        <dbReference type="ChEBI" id="CHEBI:17029"/>
        <dbReference type="ChEBI" id="CHEBI:30089"/>
        <dbReference type="ChEBI" id="CHEBI:57704"/>
        <dbReference type="EC" id="3.5.1.41"/>
    </reaction>
    <physiologicalReaction direction="left-to-right" evidence="5 7 8 9 11 12">
        <dbReference type="Rhea" id="RHEA:10465"/>
    </physiologicalReaction>
</comment>
<comment type="cofactor">
    <cofactor evidence="11 14 20">
        <name>Co(2+)</name>
        <dbReference type="ChEBI" id="CHEBI:48828"/>
    </cofactor>
    <text evidence="9 11">Some evidence supports a zinc cofactor.</text>
</comment>
<comment type="biophysicochemical properties">
    <kinetics>
        <KM evidence="11">18.4 mM for GlcNAc(2) (at 45 degrees Celsius and pH 8.5)</KM>
        <KM evidence="6 9">18 mM for GlcNAc(2) (at 30 degrees Celsius and pH 8.5)</KM>
        <KM evidence="11">11 mM for GlcNAc(3) (at 45 degrees Celsius and pH 8.5)</KM>
        <KM evidence="9">0.66 mM for GlcNAc(3) (at 37 degrees Celsius and pH 7)</KM>
        <KM evidence="6 9">4.3 mM for GlcNAc(3) (at 30 degrees Celsius and pH 8.5)</KM>
        <KM evidence="7">8.9 mM for GlcNAc(4) (at 60 degrees Celsius and pH 8)</KM>
        <KM evidence="11">0.6 mM for GlcNAc(4) (at 45 degrees Celsius and pH 8.5)</KM>
        <KM evidence="6 9">0.125 mM for GlcNAc(4) (at 30 degrees Celsius and pH 8.5)</KM>
        <KM evidence="7">5.7 mM for GlcNAc(5) (at 60 degrees Celsius and pH 8)</KM>
        <KM evidence="11">0.414 mM for GlcNAc(5) (at 45 degrees Celsius and pH 8.5)</KM>
        <KM evidence="6">0.079 mM for GlcNAc(5) (at 30 degrees Celsius and pH 8.5)</KM>
        <KM evidence="7">1.5 mM for GlcNAc(6) (at 60 degrees Celsius and pH 8)</KM>
        <KM evidence="6">0.048 mM for GlcNAc(6) (at 30 degrees Celsius and pH 8.5)</KM>
        <text evidence="6 9 11">kcat is: 8.52 sec(-1) with GlcNAc(2) as substrate (at 45 degrees Celsius and pH 8.5), 11 sec(-1) with GlcNAc(2) as substrate (at 30 degrees Celsius and pH 8.5), 5.94 sec(-1) with GlcNAc(3) as substrate (at 45 degrees Celsius and pH 8.5), 1.53 sec(-1) with GlcNAc(3) as substrate (at 37 degrees Celsius and pH 7), 6 sec(-1) with GlcNAc(3) as substrate (at 30 degrees Celsius and pH 8.5), 96.9 sec(-1) with GlcNAc(4) as substrate (at 45 degrees Celsius and pH 8.5), 7 sec(-1) with GlcNAc(4) as substrate (at 30 degrees Celsius and pH 8.5), 7 sec(-1) with GlcNAc(5) as substrate (at 30 degrees Celsius and pH 8.5), 5.4 sec(-1) with GlcNAc(6) as substrate (at 30 degrees Celsius and pH 8.5).</text>
    </kinetics>
    <phDependence>
        <text evidence="7 10 11">Optimum pH is 8 (PubMed:15555935). Optimum pH is 8.5 (PubMed:7592838). Optimum pH is 11-12 (PubMed:8987657).</text>
    </phDependence>
    <temperatureDependence>
        <text evidence="7 10 11">Optimum temperature is 60 degrees Celsius (PubMed:15555935, PubMed:8987657). Optimum temperature is 50 degrees Celsius (PubMed:7592838).</text>
    </temperatureDependence>
</comment>
<comment type="subunit">
    <text evidence="10">Monomer.</text>
</comment>
<comment type="subcellular location">
    <subcellularLocation>
        <location evidence="10 11">Secreted</location>
    </subcellularLocation>
</comment>
<comment type="PTM">
    <text evidence="10 11">N-glycosylated.</text>
</comment>
<comment type="biotechnology">
    <text evidence="16 17">Recombinant chitin deacetylase could be used to produce chitosan oligomers or polymers from chitin, this reaction is currently achieved by thermochemical alkaline deacetylation. Due to its properties, chitosan has many biological and industrial applications such as the production of films or fibers.</text>
</comment>
<comment type="similarity">
    <text evidence="19">Belongs to the polysaccharide deacetylase family.</text>
</comment>